<sequence length="478" mass="53755">DKDSYKVSGGLHGVGVSCVNALSTDMKVTVYSHGKVHQQEYKKGIPQYDVKEIGESEIHGTKVQFLPDDSIFTSSEYKYETIANRLRELSFLNKGIRITLQDHREVDADGKSEIETFHSEGGLREFVEYVDSTRERLIPRPLYMESDKGPIPVEVAMLYNTSYSENVFSYVNNINTVEGGTHVAGFRRALTRTLKSYADKSGMLEKLKMEVTGDDFREGLTAVISVKVQEPQFEGQTKTKLGNSDVMGAVDQVVGEMLNTYLEENPKEAKIIVQKVILAAQARNAARKAREMVQRKNVLSGSGLPGKLADCSESDPEKCEIYLVEGDSAGGSAKQGRDRKYHAILPLRGKILNVEKAQEHRIYENDEIKNMITALGVSFGTEEGEKVLNLTKLRYHKVIIMTDADIDGSHIRTLILTFFFRYMRALIDGGHVYIAQPPLYLVKRGKEEKYCWTEEQREVAVKELAKDGKEDSVGIQRY</sequence>
<proteinExistence type="inferred from homology"/>
<protein>
    <recommendedName>
        <fullName>DNA gyrase subunit B</fullName>
        <ecNumber evidence="2">5.6.2.2</ecNumber>
    </recommendedName>
</protein>
<gene>
    <name type="primary">gyrB</name>
</gene>
<evidence type="ECO:0000250" key="1">
    <source>
        <dbReference type="UniProtKB" id="P0AES6"/>
    </source>
</evidence>
<evidence type="ECO:0000255" key="2">
    <source>
        <dbReference type="PROSITE-ProRule" id="PRU00995"/>
    </source>
</evidence>
<evidence type="ECO:0000305" key="3"/>
<name>GYRB_CYTAU</name>
<keyword id="KW-0067">ATP-binding</keyword>
<keyword id="KW-0963">Cytoplasm</keyword>
<keyword id="KW-0238">DNA-binding</keyword>
<keyword id="KW-0413">Isomerase</keyword>
<keyword id="KW-0460">Magnesium</keyword>
<keyword id="KW-0479">Metal-binding</keyword>
<keyword id="KW-0547">Nucleotide-binding</keyword>
<keyword id="KW-0799">Topoisomerase</keyword>
<reference key="1">
    <citation type="journal article" date="1999" name="Int. J. Syst. Bacteriol.">
        <title>Phylogenetic analysis of genus Marinilabilia and related bacteria based on the amino acid sequences of GyrB and amended description of Marinilabilia salmonicolor with Marinilabilia agarovorans as its subjective synonym.</title>
        <authorList>
            <person name="Suzuki M."/>
            <person name="Nakagawa Y."/>
            <person name="Harayama S."/>
            <person name="Yamamoto S."/>
        </authorList>
    </citation>
    <scope>NUCLEOTIDE SEQUENCE [GENOMIC DNA]</scope>
    <source>
        <strain>ATCC 12208 / DSM 3654 / IAM 14300 / JCM 8511 / NBRC 16043 / NCIMB 8628</strain>
    </source>
</reference>
<organism>
    <name type="scientific">Cytophaga aurantiaca</name>
    <dbReference type="NCBI Taxonomy" id="29530"/>
    <lineage>
        <taxon>Bacteria</taxon>
        <taxon>Pseudomonadati</taxon>
        <taxon>Bacteroidota</taxon>
        <taxon>Cytophagia</taxon>
        <taxon>Cytophagales</taxon>
        <taxon>Cytophagaceae</taxon>
        <taxon>Cytophaga</taxon>
    </lineage>
</organism>
<dbReference type="EC" id="5.6.2.2" evidence="2"/>
<dbReference type="EMBL" id="AB015038">
    <property type="protein sequence ID" value="BAA90687.1"/>
    <property type="molecule type" value="Genomic_DNA"/>
</dbReference>
<dbReference type="SMR" id="Q9LCK0"/>
<dbReference type="GO" id="GO:0005737">
    <property type="term" value="C:cytoplasm"/>
    <property type="evidence" value="ECO:0007669"/>
    <property type="project" value="UniProtKB-SubCell"/>
</dbReference>
<dbReference type="GO" id="GO:0005524">
    <property type="term" value="F:ATP binding"/>
    <property type="evidence" value="ECO:0007669"/>
    <property type="project" value="UniProtKB-KW"/>
</dbReference>
<dbReference type="GO" id="GO:0003677">
    <property type="term" value="F:DNA binding"/>
    <property type="evidence" value="ECO:0007669"/>
    <property type="project" value="UniProtKB-KW"/>
</dbReference>
<dbReference type="GO" id="GO:0003918">
    <property type="term" value="F:DNA topoisomerase type II (double strand cut, ATP-hydrolyzing) activity"/>
    <property type="evidence" value="ECO:0007669"/>
    <property type="project" value="UniProtKB-EC"/>
</dbReference>
<dbReference type="GO" id="GO:0046872">
    <property type="term" value="F:metal ion binding"/>
    <property type="evidence" value="ECO:0007669"/>
    <property type="project" value="UniProtKB-KW"/>
</dbReference>
<dbReference type="GO" id="GO:0006265">
    <property type="term" value="P:DNA topological change"/>
    <property type="evidence" value="ECO:0007669"/>
    <property type="project" value="InterPro"/>
</dbReference>
<dbReference type="CDD" id="cd00822">
    <property type="entry name" value="TopoII_Trans_DNA_gyrase"/>
    <property type="match status" value="1"/>
</dbReference>
<dbReference type="CDD" id="cd03366">
    <property type="entry name" value="TOPRIM_TopoIIA_GyrB"/>
    <property type="match status" value="1"/>
</dbReference>
<dbReference type="FunFam" id="3.30.230.10:FF:000005">
    <property type="entry name" value="DNA gyrase subunit B"/>
    <property type="match status" value="1"/>
</dbReference>
<dbReference type="FunFam" id="3.40.50.670:FF:000001">
    <property type="entry name" value="DNA topoisomerase 2"/>
    <property type="match status" value="1"/>
</dbReference>
<dbReference type="Gene3D" id="3.30.230.10">
    <property type="match status" value="1"/>
</dbReference>
<dbReference type="Gene3D" id="3.40.50.670">
    <property type="match status" value="1"/>
</dbReference>
<dbReference type="Gene3D" id="3.30.565.10">
    <property type="entry name" value="Histidine kinase-like ATPase, C-terminal domain"/>
    <property type="match status" value="1"/>
</dbReference>
<dbReference type="InterPro" id="IPR036890">
    <property type="entry name" value="HATPase_C_sf"/>
</dbReference>
<dbReference type="InterPro" id="IPR020568">
    <property type="entry name" value="Ribosomal_Su5_D2-typ_SF"/>
</dbReference>
<dbReference type="InterPro" id="IPR014721">
    <property type="entry name" value="Ribsml_uS5_D2-typ_fold_subgr"/>
</dbReference>
<dbReference type="InterPro" id="IPR001241">
    <property type="entry name" value="Topo_IIA"/>
</dbReference>
<dbReference type="InterPro" id="IPR013760">
    <property type="entry name" value="Topo_IIA-like_dom_sf"/>
</dbReference>
<dbReference type="InterPro" id="IPR000565">
    <property type="entry name" value="Topo_IIA_B"/>
</dbReference>
<dbReference type="InterPro" id="IPR013759">
    <property type="entry name" value="Topo_IIA_B_C"/>
</dbReference>
<dbReference type="InterPro" id="IPR013506">
    <property type="entry name" value="Topo_IIA_bsu_dom2"/>
</dbReference>
<dbReference type="InterPro" id="IPR018522">
    <property type="entry name" value="TopoIIA_CS"/>
</dbReference>
<dbReference type="InterPro" id="IPR006171">
    <property type="entry name" value="TOPRIM_dom"/>
</dbReference>
<dbReference type="InterPro" id="IPR034160">
    <property type="entry name" value="TOPRIM_GyrB"/>
</dbReference>
<dbReference type="PANTHER" id="PTHR45866:SF1">
    <property type="entry name" value="DNA GYRASE SUBUNIT B, MITOCHONDRIAL"/>
    <property type="match status" value="1"/>
</dbReference>
<dbReference type="PANTHER" id="PTHR45866">
    <property type="entry name" value="DNA GYRASE/TOPOISOMERASE SUBUNIT B"/>
    <property type="match status" value="1"/>
</dbReference>
<dbReference type="Pfam" id="PF00204">
    <property type="entry name" value="DNA_gyraseB"/>
    <property type="match status" value="1"/>
</dbReference>
<dbReference type="Pfam" id="PF01751">
    <property type="entry name" value="Toprim"/>
    <property type="match status" value="1"/>
</dbReference>
<dbReference type="PRINTS" id="PR01159">
    <property type="entry name" value="DNAGYRASEB"/>
</dbReference>
<dbReference type="PRINTS" id="PR00418">
    <property type="entry name" value="TPI2FAMILY"/>
</dbReference>
<dbReference type="SMART" id="SM00433">
    <property type="entry name" value="TOP2c"/>
    <property type="match status" value="1"/>
</dbReference>
<dbReference type="SUPFAM" id="SSF55874">
    <property type="entry name" value="ATPase domain of HSP90 chaperone/DNA topoisomerase II/histidine kinase"/>
    <property type="match status" value="1"/>
</dbReference>
<dbReference type="SUPFAM" id="SSF54211">
    <property type="entry name" value="Ribosomal protein S5 domain 2-like"/>
    <property type="match status" value="1"/>
</dbReference>
<dbReference type="SUPFAM" id="SSF56719">
    <property type="entry name" value="Type II DNA topoisomerase"/>
    <property type="match status" value="1"/>
</dbReference>
<dbReference type="PROSITE" id="PS00177">
    <property type="entry name" value="TOPOISOMERASE_II"/>
    <property type="match status" value="1"/>
</dbReference>
<dbReference type="PROSITE" id="PS50880">
    <property type="entry name" value="TOPRIM"/>
    <property type="match status" value="1"/>
</dbReference>
<feature type="chain" id="PRO_0000145307" description="DNA gyrase subunit B">
    <location>
        <begin position="1" status="less than"/>
        <end position="478" status="greater than"/>
    </location>
</feature>
<feature type="domain" description="Toprim" evidence="2">
    <location>
        <begin position="319"/>
        <end position="438"/>
    </location>
</feature>
<feature type="binding site" evidence="2">
    <location>
        <position position="325"/>
    </location>
    <ligand>
        <name>Mg(2+)</name>
        <dbReference type="ChEBI" id="CHEBI:18420"/>
        <label>1</label>
        <note>catalytic</note>
    </ligand>
</feature>
<feature type="binding site" evidence="2">
    <location>
        <position position="403"/>
    </location>
    <ligand>
        <name>Mg(2+)</name>
        <dbReference type="ChEBI" id="CHEBI:18420"/>
        <label>1</label>
        <note>catalytic</note>
    </ligand>
</feature>
<feature type="binding site" evidence="2">
    <location>
        <position position="403"/>
    </location>
    <ligand>
        <name>Mg(2+)</name>
        <dbReference type="ChEBI" id="CHEBI:18420"/>
        <label>2</label>
    </ligand>
</feature>
<feature type="binding site" evidence="2">
    <location>
        <position position="405"/>
    </location>
    <ligand>
        <name>Mg(2+)</name>
        <dbReference type="ChEBI" id="CHEBI:18420"/>
        <label>2</label>
    </ligand>
</feature>
<feature type="site" description="Interaction with DNA" evidence="2">
    <location>
        <position position="350"/>
    </location>
</feature>
<feature type="site" description="Interaction with DNA" evidence="2">
    <location>
        <position position="353"/>
    </location>
</feature>
<feature type="non-terminal residue">
    <location>
        <position position="1"/>
    </location>
</feature>
<feature type="non-terminal residue">
    <location>
        <position position="478"/>
    </location>
</feature>
<comment type="function">
    <text evidence="1">A type II topoisomerase that negatively supercoils closed circular double-stranded (ds) DNA in an ATP-dependent manner to modulate DNA topology and maintain chromosomes in an underwound state. Negative supercoiling favors strand separation, and DNA replication, transcription, recombination and repair, all of which involve strand separation. Also able to catalyze the interconversion of other topological isomers of dsDNA rings, including catenanes and knotted rings. Type II topoisomerases break and join 2 DNA strands simultaneously in an ATP-dependent manner.</text>
</comment>
<comment type="catalytic activity">
    <reaction evidence="2">
        <text>ATP-dependent breakage, passage and rejoining of double-stranded DNA.</text>
        <dbReference type="EC" id="5.6.2.2"/>
    </reaction>
</comment>
<comment type="cofactor">
    <cofactor evidence="2">
        <name>Mg(2+)</name>
        <dbReference type="ChEBI" id="CHEBI:18420"/>
    </cofactor>
    <cofactor evidence="2">
        <name>Mn(2+)</name>
        <dbReference type="ChEBI" id="CHEBI:29035"/>
    </cofactor>
    <cofactor evidence="2">
        <name>Ca(2+)</name>
        <dbReference type="ChEBI" id="CHEBI:29108"/>
    </cofactor>
    <text evidence="2">Binds two Mg(2+) per subunit. The magnesium ions form salt bridges with both the protein and the DNA. Can also accept other divalent metal cations, such as Mn(2+) or Ca(2+).</text>
</comment>
<comment type="subunit">
    <text evidence="1">Heterotetramer, composed of two GyrA and two GyrB chains. In the heterotetramer, GyrA contains the active site tyrosine that forms a transient covalent intermediate with DNA, while GyrB binds cofactors and catalyzes ATP hydrolysis.</text>
</comment>
<comment type="subcellular location">
    <subcellularLocation>
        <location evidence="1">Cytoplasm</location>
    </subcellularLocation>
</comment>
<comment type="miscellaneous">
    <text evidence="1">Few gyrases are as efficient as E.coli at forming negative supercoils. Not all organisms have 2 type II topoisomerases; in organisms with a single type II topoisomerase this enzyme also has to decatenate newly replicated chromosomes.</text>
</comment>
<comment type="similarity">
    <text evidence="3">Belongs to the type II topoisomerase GyrB family.</text>
</comment>
<accession>Q9LCK0</accession>